<sequence>MTLGDRLGLILIHPAVTTVPGLLEAKKLELSKKNYVIGDQFLINKLNDNSVTLEKDKYDLIYYLTPEKVEDIKFPVKLIPVIQSALKTNGSFYGLTEAFKVDALVNGFEIVSVEDNDYHWIKKAGSANANVVQLKTKKKLGNEVKSGKLPTFKSKLPTFKKKDAGNNEQVVKLSVEDVEDDLDDDPEVSNELLSKAKFFNSLSLNQDAEIDENNLIKSTDGDGITMITCGKTNTKKRRACKDCTCGMKELEEEEIDNIRTQQDKVVQFTSEELTEIDFTIEGKLVGGCGSCSLGDAFRCSGCPYLGLPAFKPGQPISLSSISDDL</sequence>
<accession>A7TT02</accession>
<protein>
    <recommendedName>
        <fullName evidence="1">Fe-S cluster assembly protein DRE2</fullName>
    </recommendedName>
    <alternativeName>
        <fullName evidence="1">Anamorsin homolog</fullName>
    </alternativeName>
</protein>
<gene>
    <name evidence="1" type="primary">DRE2</name>
    <name type="ORF">Kpol_303p5</name>
</gene>
<comment type="function">
    <text evidence="1">Component of the cytosolic iron-sulfur (Fe-S) protein assembly (CIA) machinery required for the maturation of extramitochondrial Fe-S proteins. Part of an electron transfer chain functioning in an early step of cytosolic Fe-S biogenesis, facilitating the de novo assembly of a [4Fe-4S] cluster on the scaffold complex CFD1-NBP35. Electrons are transferred to DRE2 from NADPH via the FAD- and FMN-containing protein TAH18. TAH18-DRE2 are also required for the assembly of the diferric tyrosyl radical cofactor of ribonucleotide reductase (RNR), probably by providing electrons for reduction during radical cofactor maturation in the catalytic small subunit RNR2.</text>
</comment>
<comment type="cofactor">
    <cofactor evidence="1">
        <name>[2Fe-2S] cluster</name>
        <dbReference type="ChEBI" id="CHEBI:190135"/>
    </cofactor>
</comment>
<comment type="cofactor">
    <cofactor evidence="1">
        <name>[4Fe-4S] cluster</name>
        <dbReference type="ChEBI" id="CHEBI:49883"/>
    </cofactor>
</comment>
<comment type="subunit">
    <text evidence="1">Monomer. Interacts with TAH18. Interacts with MIA40.</text>
</comment>
<comment type="subcellular location">
    <subcellularLocation>
        <location evidence="1">Cytoplasm</location>
    </subcellularLocation>
    <subcellularLocation>
        <location evidence="1">Mitochondrion intermembrane space</location>
    </subcellularLocation>
</comment>
<comment type="domain">
    <text evidence="1">The C-terminal domain binds 2 Fe-S clusters but is otherwise mostly in an intrinsically disordered conformation.</text>
</comment>
<comment type="domain">
    <text evidence="1">The N-terminal domain has structural similarity with S-adenosyl-L-methionine-dependent methyltransferases, but does not bind S-adenosyl-L-methionine. It is required for correct assembly of the 2 Fe-S clusters.</text>
</comment>
<comment type="domain">
    <text evidence="1">The twin Cx2C motifs are involved in the recognition by the mitochondrial MIA40-ERV1 disulfide relay system. The formation of 2 disulfide bonds in the Cx2C motifs through dithiol/disulfide exchange reactions effectively traps the protein in the mitochondrial intermembrane space.</text>
</comment>
<comment type="similarity">
    <text evidence="1">Belongs to the anamorsin family.</text>
</comment>
<organism>
    <name type="scientific">Vanderwaltozyma polyspora (strain ATCC 22028 / DSM 70294 / BCRC 21397 / CBS 2163 / NBRC 10782 / NRRL Y-8283 / UCD 57-17)</name>
    <name type="common">Kluyveromyces polysporus</name>
    <dbReference type="NCBI Taxonomy" id="436907"/>
    <lineage>
        <taxon>Eukaryota</taxon>
        <taxon>Fungi</taxon>
        <taxon>Dikarya</taxon>
        <taxon>Ascomycota</taxon>
        <taxon>Saccharomycotina</taxon>
        <taxon>Saccharomycetes</taxon>
        <taxon>Saccharomycetales</taxon>
        <taxon>Saccharomycetaceae</taxon>
        <taxon>Vanderwaltozyma</taxon>
    </lineage>
</organism>
<proteinExistence type="inferred from homology"/>
<reference key="1">
    <citation type="journal article" date="2007" name="Proc. Natl. Acad. Sci. U.S.A.">
        <title>Independent sorting-out of thousands of duplicated gene pairs in two yeast species descended from a whole-genome duplication.</title>
        <authorList>
            <person name="Scannell D.R."/>
            <person name="Frank A.C."/>
            <person name="Conant G.C."/>
            <person name="Byrne K.P."/>
            <person name="Woolfit M."/>
            <person name="Wolfe K.H."/>
        </authorList>
    </citation>
    <scope>NUCLEOTIDE SEQUENCE [LARGE SCALE GENOMIC DNA]</scope>
    <source>
        <strain>ATCC 22028 / DSM 70294 / BCRC 21397 / CBS 2163 / NBRC 10782 / NRRL Y-8283 / UCD 57-17</strain>
    </source>
</reference>
<dbReference type="EMBL" id="DS480532">
    <property type="protein sequence ID" value="EDO14606.1"/>
    <property type="molecule type" value="Genomic_DNA"/>
</dbReference>
<dbReference type="RefSeq" id="XP_001642464.1">
    <property type="nucleotide sequence ID" value="XM_001642414.1"/>
</dbReference>
<dbReference type="SMR" id="A7TT02"/>
<dbReference type="FunCoup" id="A7TT02">
    <property type="interactions" value="181"/>
</dbReference>
<dbReference type="STRING" id="436907.A7TT02"/>
<dbReference type="GeneID" id="5542628"/>
<dbReference type="KEGG" id="vpo:Kpol_303p5"/>
<dbReference type="eggNOG" id="KOG4020">
    <property type="taxonomic scope" value="Eukaryota"/>
</dbReference>
<dbReference type="HOGENOM" id="CLU_067152_0_0_1"/>
<dbReference type="InParanoid" id="A7TT02"/>
<dbReference type="OMA" id="TMITCGK"/>
<dbReference type="OrthoDB" id="311633at2759"/>
<dbReference type="PhylomeDB" id="A7TT02"/>
<dbReference type="Proteomes" id="UP000000267">
    <property type="component" value="Unassembled WGS sequence"/>
</dbReference>
<dbReference type="GO" id="GO:0097361">
    <property type="term" value="C:cytosolic [4Fe-4S] assembly targeting complex"/>
    <property type="evidence" value="ECO:0007669"/>
    <property type="project" value="EnsemblFungi"/>
</dbReference>
<dbReference type="GO" id="GO:0005758">
    <property type="term" value="C:mitochondrial intermembrane space"/>
    <property type="evidence" value="ECO:0007669"/>
    <property type="project" value="UniProtKB-SubCell"/>
</dbReference>
<dbReference type="GO" id="GO:0051537">
    <property type="term" value="F:2 iron, 2 sulfur cluster binding"/>
    <property type="evidence" value="ECO:0007669"/>
    <property type="project" value="UniProtKB-UniRule"/>
</dbReference>
<dbReference type="GO" id="GO:0051539">
    <property type="term" value="F:4 iron, 4 sulfur cluster binding"/>
    <property type="evidence" value="ECO:0007669"/>
    <property type="project" value="UniProtKB-KW"/>
</dbReference>
<dbReference type="GO" id="GO:0009055">
    <property type="term" value="F:electron transfer activity"/>
    <property type="evidence" value="ECO:0007669"/>
    <property type="project" value="UniProtKB-UniRule"/>
</dbReference>
<dbReference type="GO" id="GO:0046872">
    <property type="term" value="F:metal ion binding"/>
    <property type="evidence" value="ECO:0007669"/>
    <property type="project" value="UniProtKB-KW"/>
</dbReference>
<dbReference type="GO" id="GO:0034599">
    <property type="term" value="P:cellular response to oxidative stress"/>
    <property type="evidence" value="ECO:0007669"/>
    <property type="project" value="EnsemblFungi"/>
</dbReference>
<dbReference type="GO" id="GO:0016226">
    <property type="term" value="P:iron-sulfur cluster assembly"/>
    <property type="evidence" value="ECO:0007669"/>
    <property type="project" value="UniProtKB-UniRule"/>
</dbReference>
<dbReference type="GO" id="GO:1901299">
    <property type="term" value="P:negative regulation of hydrogen peroxide-mediated programmed cell death"/>
    <property type="evidence" value="ECO:0007669"/>
    <property type="project" value="EnsemblFungi"/>
</dbReference>
<dbReference type="GO" id="GO:0045019">
    <property type="term" value="P:negative regulation of nitric oxide biosynthetic process"/>
    <property type="evidence" value="ECO:0007669"/>
    <property type="project" value="EnsemblFungi"/>
</dbReference>
<dbReference type="Gene3D" id="3.40.50.11000">
    <property type="entry name" value="Fe-S cluster assembly protein Dre2, N-terminal domain"/>
    <property type="match status" value="1"/>
</dbReference>
<dbReference type="HAMAP" id="MF_03115">
    <property type="entry name" value="Anamorsin"/>
    <property type="match status" value="1"/>
</dbReference>
<dbReference type="InterPro" id="IPR007785">
    <property type="entry name" value="Anamorsin"/>
</dbReference>
<dbReference type="InterPro" id="IPR046408">
    <property type="entry name" value="CIAPIN1"/>
</dbReference>
<dbReference type="InterPro" id="IPR031838">
    <property type="entry name" value="Dre2_N"/>
</dbReference>
<dbReference type="PANTHER" id="PTHR13273">
    <property type="entry name" value="ANAMORSIN"/>
    <property type="match status" value="1"/>
</dbReference>
<dbReference type="PANTHER" id="PTHR13273:SF14">
    <property type="entry name" value="ANAMORSIN"/>
    <property type="match status" value="1"/>
</dbReference>
<dbReference type="Pfam" id="PF05093">
    <property type="entry name" value="CIAPIN1"/>
    <property type="match status" value="1"/>
</dbReference>
<dbReference type="Pfam" id="PF16803">
    <property type="entry name" value="DRE2_N"/>
    <property type="match status" value="1"/>
</dbReference>
<keyword id="KW-0001">2Fe-2S</keyword>
<keyword id="KW-0004">4Fe-4S</keyword>
<keyword id="KW-0963">Cytoplasm</keyword>
<keyword id="KW-0408">Iron</keyword>
<keyword id="KW-0411">Iron-sulfur</keyword>
<keyword id="KW-0479">Metal-binding</keyword>
<keyword id="KW-0496">Mitochondrion</keyword>
<keyword id="KW-1185">Reference proteome</keyword>
<feature type="chain" id="PRO_0000324873" description="Fe-S cluster assembly protein DRE2">
    <location>
        <begin position="1"/>
        <end position="325"/>
    </location>
</feature>
<feature type="region of interest" description="N-terminal SAM-like domain" evidence="1">
    <location>
        <begin position="1"/>
        <end position="169"/>
    </location>
</feature>
<feature type="region of interest" description="Linker" evidence="1">
    <location>
        <begin position="170"/>
        <end position="222"/>
    </location>
</feature>
<feature type="region of interest" description="Fe-S binding site A" evidence="1">
    <location>
        <begin position="229"/>
        <end position="245"/>
    </location>
</feature>
<feature type="region of interest" description="Fe-S binding site B" evidence="1">
    <location>
        <begin position="288"/>
        <end position="302"/>
    </location>
</feature>
<feature type="short sequence motif" description="Cx2C motif 1" evidence="1">
    <location>
        <begin position="288"/>
        <end position="291"/>
    </location>
</feature>
<feature type="short sequence motif" description="Cx2C motif 2" evidence="1">
    <location>
        <begin position="299"/>
        <end position="302"/>
    </location>
</feature>
<feature type="binding site" evidence="1">
    <location>
        <position position="229"/>
    </location>
    <ligand>
        <name>[2Fe-2S] cluster</name>
        <dbReference type="ChEBI" id="CHEBI:190135"/>
    </ligand>
</feature>
<feature type="binding site" evidence="1">
    <location>
        <position position="240"/>
    </location>
    <ligand>
        <name>[2Fe-2S] cluster</name>
        <dbReference type="ChEBI" id="CHEBI:190135"/>
    </ligand>
</feature>
<feature type="binding site" evidence="1">
    <location>
        <position position="243"/>
    </location>
    <ligand>
        <name>[2Fe-2S] cluster</name>
        <dbReference type="ChEBI" id="CHEBI:190135"/>
    </ligand>
</feature>
<feature type="binding site" evidence="1">
    <location>
        <position position="245"/>
    </location>
    <ligand>
        <name>[2Fe-2S] cluster</name>
        <dbReference type="ChEBI" id="CHEBI:190135"/>
    </ligand>
</feature>
<feature type="binding site" evidence="1">
    <location>
        <position position="288"/>
    </location>
    <ligand>
        <name>[4Fe-4S] cluster</name>
        <dbReference type="ChEBI" id="CHEBI:49883"/>
    </ligand>
</feature>
<feature type="binding site" evidence="1">
    <location>
        <position position="291"/>
    </location>
    <ligand>
        <name>[4Fe-4S] cluster</name>
        <dbReference type="ChEBI" id="CHEBI:49883"/>
    </ligand>
</feature>
<feature type="binding site" evidence="1">
    <location>
        <position position="299"/>
    </location>
    <ligand>
        <name>[4Fe-4S] cluster</name>
        <dbReference type="ChEBI" id="CHEBI:49883"/>
    </ligand>
</feature>
<feature type="binding site" evidence="1">
    <location>
        <position position="302"/>
    </location>
    <ligand>
        <name>[4Fe-4S] cluster</name>
        <dbReference type="ChEBI" id="CHEBI:49883"/>
    </ligand>
</feature>
<evidence type="ECO:0000255" key="1">
    <source>
        <dbReference type="HAMAP-Rule" id="MF_03115"/>
    </source>
</evidence>
<name>DRE2_VANPO</name>